<evidence type="ECO:0000250" key="1"/>
<evidence type="ECO:0000255" key="2">
    <source>
        <dbReference type="HAMAP-Rule" id="MF_00118"/>
    </source>
</evidence>
<accession>Q2FJ92</accession>
<reference key="1">
    <citation type="journal article" date="2006" name="Lancet">
        <title>Complete genome sequence of USA300, an epidemic clone of community-acquired meticillin-resistant Staphylococcus aureus.</title>
        <authorList>
            <person name="Diep B.A."/>
            <person name="Gill S.R."/>
            <person name="Chang R.F."/>
            <person name="Phan T.H."/>
            <person name="Chen J.H."/>
            <person name="Davidson M.G."/>
            <person name="Lin F."/>
            <person name="Lin J."/>
            <person name="Carleton H.A."/>
            <person name="Mongodin E.F."/>
            <person name="Sensabaugh G.F."/>
            <person name="Perdreau-Remington F."/>
        </authorList>
    </citation>
    <scope>NUCLEOTIDE SEQUENCE [LARGE SCALE GENOMIC DNA]</scope>
    <source>
        <strain>USA300</strain>
    </source>
</reference>
<comment type="function">
    <text evidence="2">GTP hydrolase that promotes the GTP-dependent binding of aminoacyl-tRNA to the A-site of ribosomes during protein biosynthesis.</text>
</comment>
<comment type="catalytic activity">
    <reaction evidence="2">
        <text>GTP + H2O = GDP + phosphate + H(+)</text>
        <dbReference type="Rhea" id="RHEA:19669"/>
        <dbReference type="ChEBI" id="CHEBI:15377"/>
        <dbReference type="ChEBI" id="CHEBI:15378"/>
        <dbReference type="ChEBI" id="CHEBI:37565"/>
        <dbReference type="ChEBI" id="CHEBI:43474"/>
        <dbReference type="ChEBI" id="CHEBI:58189"/>
        <dbReference type="EC" id="3.6.5.3"/>
    </reaction>
    <physiologicalReaction direction="left-to-right" evidence="2">
        <dbReference type="Rhea" id="RHEA:19670"/>
    </physiologicalReaction>
</comment>
<comment type="subunit">
    <text evidence="2">Monomer.</text>
</comment>
<comment type="subcellular location">
    <subcellularLocation>
        <location evidence="2">Cytoplasm</location>
    </subcellularLocation>
</comment>
<comment type="similarity">
    <text evidence="2">Belongs to the TRAFAC class translation factor GTPase superfamily. Classic translation factor GTPase family. EF-Tu/EF-1A subfamily.</text>
</comment>
<sequence length="394" mass="43104">MAKEKFDRSKEHANIGTIGHVDHGKTTLTAAIATVLAKNGDSVAQSYDMIDNAPEEKERGITINTSHIEYQTDKRHYAHVDCPGHADYVKNMITGAAQMDGGILVVSAADGPMPQTREHILLSRNVGVPALVVFLNKVDMVDDEELLELVEMEVRDLLSEYDFPGDDVPVIAGSALKALEGDAQYEEKILELMEAVDTYIPTPERDSDKPFMMPVEDVFSITGRGTVATGRVERGQIKVGEEVEIIGLHDTSKTTVTGVEMFRKLLDYAEAGDNIGALLRGVAREDVQRGQVLAAPGSITPHTEFKAEVYVLSKDEGGRHTPFFSNYRPQFYFRTTDVTGVVHLPEGTEMVMPGDNVEMTVELIAPIAIEDGTRFSIREGGRTVGSGVVTEIIK</sequence>
<keyword id="KW-0963">Cytoplasm</keyword>
<keyword id="KW-0251">Elongation factor</keyword>
<keyword id="KW-0342">GTP-binding</keyword>
<keyword id="KW-0378">Hydrolase</keyword>
<keyword id="KW-0460">Magnesium</keyword>
<keyword id="KW-0479">Metal-binding</keyword>
<keyword id="KW-0547">Nucleotide-binding</keyword>
<keyword id="KW-0648">Protein biosynthesis</keyword>
<gene>
    <name evidence="2" type="primary">tuf</name>
    <name type="ordered locus">SAUSA300_0533</name>
</gene>
<organism>
    <name type="scientific">Staphylococcus aureus (strain USA300)</name>
    <dbReference type="NCBI Taxonomy" id="367830"/>
    <lineage>
        <taxon>Bacteria</taxon>
        <taxon>Bacillati</taxon>
        <taxon>Bacillota</taxon>
        <taxon>Bacilli</taxon>
        <taxon>Bacillales</taxon>
        <taxon>Staphylococcaceae</taxon>
        <taxon>Staphylococcus</taxon>
    </lineage>
</organism>
<protein>
    <recommendedName>
        <fullName evidence="2">Elongation factor Tu</fullName>
        <shortName evidence="2">EF-Tu</shortName>
        <ecNumber evidence="2">3.6.5.3</ecNumber>
    </recommendedName>
</protein>
<feature type="chain" id="PRO_1000015749" description="Elongation factor Tu">
    <location>
        <begin position="1"/>
        <end position="394"/>
    </location>
</feature>
<feature type="domain" description="tr-type G">
    <location>
        <begin position="10"/>
        <end position="204"/>
    </location>
</feature>
<feature type="region of interest" description="G1" evidence="1">
    <location>
        <begin position="19"/>
        <end position="26"/>
    </location>
</feature>
<feature type="region of interest" description="G2" evidence="1">
    <location>
        <begin position="60"/>
        <end position="64"/>
    </location>
</feature>
<feature type="region of interest" description="G3" evidence="1">
    <location>
        <begin position="81"/>
        <end position="84"/>
    </location>
</feature>
<feature type="region of interest" description="G4" evidence="1">
    <location>
        <begin position="136"/>
        <end position="139"/>
    </location>
</feature>
<feature type="region of interest" description="G5" evidence="1">
    <location>
        <begin position="174"/>
        <end position="176"/>
    </location>
</feature>
<feature type="binding site" evidence="2">
    <location>
        <begin position="19"/>
        <end position="26"/>
    </location>
    <ligand>
        <name>GTP</name>
        <dbReference type="ChEBI" id="CHEBI:37565"/>
    </ligand>
</feature>
<feature type="binding site" evidence="2">
    <location>
        <position position="26"/>
    </location>
    <ligand>
        <name>Mg(2+)</name>
        <dbReference type="ChEBI" id="CHEBI:18420"/>
    </ligand>
</feature>
<feature type="binding site" evidence="2">
    <location>
        <begin position="81"/>
        <end position="85"/>
    </location>
    <ligand>
        <name>GTP</name>
        <dbReference type="ChEBI" id="CHEBI:37565"/>
    </ligand>
</feature>
<feature type="binding site" evidence="2">
    <location>
        <begin position="136"/>
        <end position="139"/>
    </location>
    <ligand>
        <name>GTP</name>
        <dbReference type="ChEBI" id="CHEBI:37565"/>
    </ligand>
</feature>
<proteinExistence type="inferred from homology"/>
<name>EFTU_STAA3</name>
<dbReference type="EC" id="3.6.5.3" evidence="2"/>
<dbReference type="EMBL" id="CP000255">
    <property type="protein sequence ID" value="ABD21510.1"/>
    <property type="molecule type" value="Genomic_DNA"/>
</dbReference>
<dbReference type="RefSeq" id="WP_001040568.1">
    <property type="nucleotide sequence ID" value="NZ_CP027476.1"/>
</dbReference>
<dbReference type="SMR" id="Q2FJ92"/>
<dbReference type="KEGG" id="saa:SAUSA300_0533"/>
<dbReference type="HOGENOM" id="CLU_007265_0_0_9"/>
<dbReference type="OMA" id="KTHANIG"/>
<dbReference type="Proteomes" id="UP000001939">
    <property type="component" value="Chromosome"/>
</dbReference>
<dbReference type="GO" id="GO:0005829">
    <property type="term" value="C:cytosol"/>
    <property type="evidence" value="ECO:0007669"/>
    <property type="project" value="TreeGrafter"/>
</dbReference>
<dbReference type="GO" id="GO:0005525">
    <property type="term" value="F:GTP binding"/>
    <property type="evidence" value="ECO:0007669"/>
    <property type="project" value="UniProtKB-UniRule"/>
</dbReference>
<dbReference type="GO" id="GO:0003924">
    <property type="term" value="F:GTPase activity"/>
    <property type="evidence" value="ECO:0007669"/>
    <property type="project" value="InterPro"/>
</dbReference>
<dbReference type="GO" id="GO:0003746">
    <property type="term" value="F:translation elongation factor activity"/>
    <property type="evidence" value="ECO:0007669"/>
    <property type="project" value="UniProtKB-UniRule"/>
</dbReference>
<dbReference type="CDD" id="cd01884">
    <property type="entry name" value="EF_Tu"/>
    <property type="match status" value="1"/>
</dbReference>
<dbReference type="CDD" id="cd03697">
    <property type="entry name" value="EFTU_II"/>
    <property type="match status" value="1"/>
</dbReference>
<dbReference type="CDD" id="cd03707">
    <property type="entry name" value="EFTU_III"/>
    <property type="match status" value="1"/>
</dbReference>
<dbReference type="FunFam" id="2.40.30.10:FF:000001">
    <property type="entry name" value="Elongation factor Tu"/>
    <property type="match status" value="1"/>
</dbReference>
<dbReference type="FunFam" id="3.40.50.300:FF:000003">
    <property type="entry name" value="Elongation factor Tu"/>
    <property type="match status" value="1"/>
</dbReference>
<dbReference type="Gene3D" id="3.40.50.300">
    <property type="entry name" value="P-loop containing nucleotide triphosphate hydrolases"/>
    <property type="match status" value="1"/>
</dbReference>
<dbReference type="Gene3D" id="2.40.30.10">
    <property type="entry name" value="Translation factors"/>
    <property type="match status" value="2"/>
</dbReference>
<dbReference type="HAMAP" id="MF_00118_B">
    <property type="entry name" value="EF_Tu_B"/>
    <property type="match status" value="1"/>
</dbReference>
<dbReference type="InterPro" id="IPR041709">
    <property type="entry name" value="EF-Tu_GTP-bd"/>
</dbReference>
<dbReference type="InterPro" id="IPR050055">
    <property type="entry name" value="EF-Tu_GTPase"/>
</dbReference>
<dbReference type="InterPro" id="IPR004161">
    <property type="entry name" value="EFTu-like_2"/>
</dbReference>
<dbReference type="InterPro" id="IPR033720">
    <property type="entry name" value="EFTU_2"/>
</dbReference>
<dbReference type="InterPro" id="IPR031157">
    <property type="entry name" value="G_TR_CS"/>
</dbReference>
<dbReference type="InterPro" id="IPR027417">
    <property type="entry name" value="P-loop_NTPase"/>
</dbReference>
<dbReference type="InterPro" id="IPR005225">
    <property type="entry name" value="Small_GTP-bd"/>
</dbReference>
<dbReference type="InterPro" id="IPR000795">
    <property type="entry name" value="T_Tr_GTP-bd_dom"/>
</dbReference>
<dbReference type="InterPro" id="IPR009000">
    <property type="entry name" value="Transl_B-barrel_sf"/>
</dbReference>
<dbReference type="InterPro" id="IPR009001">
    <property type="entry name" value="Transl_elong_EF1A/Init_IF2_C"/>
</dbReference>
<dbReference type="InterPro" id="IPR004541">
    <property type="entry name" value="Transl_elong_EFTu/EF1A_bac/org"/>
</dbReference>
<dbReference type="InterPro" id="IPR004160">
    <property type="entry name" value="Transl_elong_EFTu/EF1A_C"/>
</dbReference>
<dbReference type="NCBIfam" id="TIGR00485">
    <property type="entry name" value="EF-Tu"/>
    <property type="match status" value="1"/>
</dbReference>
<dbReference type="NCBIfam" id="NF000766">
    <property type="entry name" value="PRK00049.1"/>
    <property type="match status" value="1"/>
</dbReference>
<dbReference type="NCBIfam" id="NF009372">
    <property type="entry name" value="PRK12735.1"/>
    <property type="match status" value="1"/>
</dbReference>
<dbReference type="NCBIfam" id="NF009373">
    <property type="entry name" value="PRK12736.1"/>
    <property type="match status" value="1"/>
</dbReference>
<dbReference type="NCBIfam" id="TIGR00231">
    <property type="entry name" value="small_GTP"/>
    <property type="match status" value="1"/>
</dbReference>
<dbReference type="PANTHER" id="PTHR43721:SF22">
    <property type="entry name" value="ELONGATION FACTOR TU, MITOCHONDRIAL"/>
    <property type="match status" value="1"/>
</dbReference>
<dbReference type="PANTHER" id="PTHR43721">
    <property type="entry name" value="ELONGATION FACTOR TU-RELATED"/>
    <property type="match status" value="1"/>
</dbReference>
<dbReference type="Pfam" id="PF00009">
    <property type="entry name" value="GTP_EFTU"/>
    <property type="match status" value="1"/>
</dbReference>
<dbReference type="Pfam" id="PF03144">
    <property type="entry name" value="GTP_EFTU_D2"/>
    <property type="match status" value="1"/>
</dbReference>
<dbReference type="Pfam" id="PF03143">
    <property type="entry name" value="GTP_EFTU_D3"/>
    <property type="match status" value="1"/>
</dbReference>
<dbReference type="PRINTS" id="PR00315">
    <property type="entry name" value="ELONGATNFCT"/>
</dbReference>
<dbReference type="SUPFAM" id="SSF50465">
    <property type="entry name" value="EF-Tu/eEF-1alpha/eIF2-gamma C-terminal domain"/>
    <property type="match status" value="1"/>
</dbReference>
<dbReference type="SUPFAM" id="SSF52540">
    <property type="entry name" value="P-loop containing nucleoside triphosphate hydrolases"/>
    <property type="match status" value="1"/>
</dbReference>
<dbReference type="SUPFAM" id="SSF50447">
    <property type="entry name" value="Translation proteins"/>
    <property type="match status" value="1"/>
</dbReference>
<dbReference type="PROSITE" id="PS00301">
    <property type="entry name" value="G_TR_1"/>
    <property type="match status" value="1"/>
</dbReference>
<dbReference type="PROSITE" id="PS51722">
    <property type="entry name" value="G_TR_2"/>
    <property type="match status" value="1"/>
</dbReference>